<gene>
    <name type="primary">tif32</name>
    <name type="synonym">eif3a</name>
    <name type="ORF">SPBC17D11.05</name>
</gene>
<comment type="function">
    <text evidence="1">RNA-binding component of the eukaryotic translation initiation factor 3 (eIF-3) complex, which is involved in protein synthesis of a specialized repertoire of mRNAs and, together with other initiation factors, stimulates binding of mRNA and methionyl-tRNAi to the 40S ribosome. The eIF-3 complex specifically targets and initiates translation of a subset of mRNAs involved in cell proliferation.</text>
</comment>
<comment type="subunit">
    <text evidence="1 4 5">Component of the eukaryotic translation initiation factor 3 (eIF-3) complex. The eIF-3 complex appears to include tif32/eif3a, SPAC25G10.08/eif3b, tif33/eif3c, SPBC4C3.07/eif3f, tif35/eif3g and sum1/eif3i. This set of common subunits may also associate exclusively with either moe1/eif3d and int6/eif3e, or with SPAC821.05/eif3h and SPAC1751.03/eif3m. The eIF-3 complex may also include SPAC3A12.13c/eif3j.</text>
</comment>
<comment type="subcellular location">
    <subcellularLocation>
        <location>Cytoplasm</location>
    </subcellularLocation>
</comment>
<comment type="similarity">
    <text evidence="1">Belongs to the eIF-3 subunit A family.</text>
</comment>
<dbReference type="EMBL" id="CU329671">
    <property type="protein sequence ID" value="CAA21076.1"/>
    <property type="molecule type" value="Genomic_DNA"/>
</dbReference>
<dbReference type="EMBL" id="D89275">
    <property type="protein sequence ID" value="BAA13936.1"/>
    <property type="molecule type" value="mRNA"/>
</dbReference>
<dbReference type="PIR" id="T39716">
    <property type="entry name" value="T39716"/>
</dbReference>
<dbReference type="PIR" id="T43205">
    <property type="entry name" value="T43205"/>
</dbReference>
<dbReference type="RefSeq" id="NP_596379.1">
    <property type="nucleotide sequence ID" value="NM_001022300.2"/>
</dbReference>
<dbReference type="SMR" id="O74760"/>
<dbReference type="BioGRID" id="276482">
    <property type="interactions" value="20"/>
</dbReference>
<dbReference type="FunCoup" id="O74760">
    <property type="interactions" value="792"/>
</dbReference>
<dbReference type="IntAct" id="O74760">
    <property type="interactions" value="1"/>
</dbReference>
<dbReference type="MINT" id="O74760"/>
<dbReference type="STRING" id="284812.O74760"/>
<dbReference type="iPTMnet" id="O74760"/>
<dbReference type="PaxDb" id="4896-SPBC17D11.05.1"/>
<dbReference type="EnsemblFungi" id="SPBC17D11.05.1">
    <property type="protein sequence ID" value="SPBC17D11.05.1:pep"/>
    <property type="gene ID" value="SPBC17D11.05"/>
</dbReference>
<dbReference type="GeneID" id="2539938"/>
<dbReference type="KEGG" id="spo:2539938"/>
<dbReference type="PomBase" id="SPBC17D11.05">
    <property type="gene designation" value="tif32"/>
</dbReference>
<dbReference type="VEuPathDB" id="FungiDB:SPBC17D11.05"/>
<dbReference type="eggNOG" id="KOG2072">
    <property type="taxonomic scope" value="Eukaryota"/>
</dbReference>
<dbReference type="HOGENOM" id="CLU_002096_2_1_1"/>
<dbReference type="InParanoid" id="O74760"/>
<dbReference type="OMA" id="EHITNKR"/>
<dbReference type="PhylomeDB" id="O74760"/>
<dbReference type="Reactome" id="R-SPO-156827">
    <property type="pathway name" value="L13a-mediated translational silencing of Ceruloplasmin expression"/>
</dbReference>
<dbReference type="Reactome" id="R-SPO-72649">
    <property type="pathway name" value="Translation initiation complex formation"/>
</dbReference>
<dbReference type="Reactome" id="R-SPO-72689">
    <property type="pathway name" value="Formation of a pool of free 40S subunits"/>
</dbReference>
<dbReference type="Reactome" id="R-SPO-72695">
    <property type="pathway name" value="Formation of the ternary complex, and subsequently, the 43S complex"/>
</dbReference>
<dbReference type="Reactome" id="R-SPO-72702">
    <property type="pathway name" value="Ribosomal scanning and start codon recognition"/>
</dbReference>
<dbReference type="Reactome" id="R-SPO-72706">
    <property type="pathway name" value="GTP hydrolysis and joining of the 60S ribosomal subunit"/>
</dbReference>
<dbReference type="PRO" id="PR:O74760"/>
<dbReference type="Proteomes" id="UP000002485">
    <property type="component" value="Chromosome II"/>
</dbReference>
<dbReference type="GO" id="GO:0005737">
    <property type="term" value="C:cytoplasm"/>
    <property type="evidence" value="ECO:0007005"/>
    <property type="project" value="PomBase"/>
</dbReference>
<dbReference type="GO" id="GO:0010494">
    <property type="term" value="C:cytoplasmic stress granule"/>
    <property type="evidence" value="ECO:0000314"/>
    <property type="project" value="PomBase"/>
</dbReference>
<dbReference type="GO" id="GO:0016282">
    <property type="term" value="C:eukaryotic 43S preinitiation complex"/>
    <property type="evidence" value="ECO:0000314"/>
    <property type="project" value="PomBase"/>
</dbReference>
<dbReference type="GO" id="GO:0033290">
    <property type="term" value="C:eukaryotic 48S preinitiation complex"/>
    <property type="evidence" value="ECO:0007669"/>
    <property type="project" value="UniProtKB-UniRule"/>
</dbReference>
<dbReference type="GO" id="GO:0005852">
    <property type="term" value="C:eukaryotic translation initiation factor 3 complex"/>
    <property type="evidence" value="ECO:0000314"/>
    <property type="project" value="PomBase"/>
</dbReference>
<dbReference type="GO" id="GO:0071540">
    <property type="term" value="C:eukaryotic translation initiation factor 3 complex, eIF3e"/>
    <property type="evidence" value="ECO:0000314"/>
    <property type="project" value="PomBase"/>
</dbReference>
<dbReference type="GO" id="GO:0071541">
    <property type="term" value="C:eukaryotic translation initiation factor 3 complex, eIF3m"/>
    <property type="evidence" value="ECO:0000314"/>
    <property type="project" value="PomBase"/>
</dbReference>
<dbReference type="GO" id="GO:0043614">
    <property type="term" value="C:multi-eIF complex"/>
    <property type="evidence" value="ECO:0000318"/>
    <property type="project" value="GO_Central"/>
</dbReference>
<dbReference type="GO" id="GO:0003729">
    <property type="term" value="F:mRNA binding"/>
    <property type="evidence" value="ECO:0000318"/>
    <property type="project" value="GO_Central"/>
</dbReference>
<dbReference type="GO" id="GO:0003743">
    <property type="term" value="F:translation initiation factor activity"/>
    <property type="evidence" value="ECO:0007669"/>
    <property type="project" value="UniProtKB-UniRule"/>
</dbReference>
<dbReference type="GO" id="GO:0001732">
    <property type="term" value="P:formation of cytoplasmic translation initiation complex"/>
    <property type="evidence" value="ECO:0000318"/>
    <property type="project" value="GO_Central"/>
</dbReference>
<dbReference type="GO" id="GO:0002188">
    <property type="term" value="P:translation reinitiation"/>
    <property type="evidence" value="ECO:0000318"/>
    <property type="project" value="GO_Central"/>
</dbReference>
<dbReference type="FunFam" id="1.25.40.860:FF:000003">
    <property type="entry name" value="Eukaryotic translation initiation factor 3 subunit A"/>
    <property type="match status" value="1"/>
</dbReference>
<dbReference type="FunFam" id="4.10.860.10:FF:000001">
    <property type="entry name" value="Eukaryotic translation initiation factor 3 subunit A"/>
    <property type="match status" value="1"/>
</dbReference>
<dbReference type="Gene3D" id="1.25.40.860">
    <property type="match status" value="1"/>
</dbReference>
<dbReference type="Gene3D" id="4.10.860.10">
    <property type="entry name" value="UVR domain"/>
    <property type="match status" value="1"/>
</dbReference>
<dbReference type="HAMAP" id="MF_03000">
    <property type="entry name" value="eIF3a"/>
    <property type="match status" value="1"/>
</dbReference>
<dbReference type="InterPro" id="IPR027512">
    <property type="entry name" value="EIF3A"/>
</dbReference>
<dbReference type="InterPro" id="IPR054711">
    <property type="entry name" value="eIF3a_PCI_TPR-like"/>
</dbReference>
<dbReference type="InterPro" id="IPR000717">
    <property type="entry name" value="PCI_dom"/>
</dbReference>
<dbReference type="PANTHER" id="PTHR14005:SF0">
    <property type="entry name" value="EUKARYOTIC TRANSLATION INITIATION FACTOR 3 SUBUNIT A"/>
    <property type="match status" value="1"/>
</dbReference>
<dbReference type="PANTHER" id="PTHR14005">
    <property type="entry name" value="EUKARYOTIC TRANSLATION INITIATION FACTOR 3, THETA SUBUNIT"/>
    <property type="match status" value="1"/>
</dbReference>
<dbReference type="Pfam" id="PF22591">
    <property type="entry name" value="eIF3a_PCI_TPR-like"/>
    <property type="match status" value="1"/>
</dbReference>
<dbReference type="SMART" id="SM00088">
    <property type="entry name" value="PINT"/>
    <property type="match status" value="1"/>
</dbReference>
<dbReference type="PROSITE" id="PS50250">
    <property type="entry name" value="PCI"/>
    <property type="match status" value="1"/>
</dbReference>
<evidence type="ECO:0000255" key="1">
    <source>
        <dbReference type="HAMAP-Rule" id="MF_03000"/>
    </source>
</evidence>
<evidence type="ECO:0000255" key="2">
    <source>
        <dbReference type="PROSITE-ProRule" id="PRU01185"/>
    </source>
</evidence>
<evidence type="ECO:0000256" key="3">
    <source>
        <dbReference type="SAM" id="MobiDB-lite"/>
    </source>
</evidence>
<evidence type="ECO:0000269" key="4">
    <source>
    </source>
</evidence>
<evidence type="ECO:0000269" key="5">
    <source>
    </source>
</evidence>
<evidence type="ECO:0000269" key="6">
    <source>
    </source>
</evidence>
<evidence type="ECO:0000305" key="7"/>
<sequence length="932" mass="107071">MAPPQGKPENVLRLADELIALDQHSSALQSLHETIVLKRSRNAQGFSLEPIMMRFIELCVHLRKGKIAKEGLYTYKNAVQNTSVTAIENVVKHFIELANKRVQEAQEKADKISVEYVDDLEATETPESIMMSLVSGDLSKSRTDRALVTPWLKFLWDAYRTVLDILRNNARLEVMYQLIANSAFQFCLKYQRKTEFRRLCELLRSHLGNASKFSNAPHSINLNDAETMQRHLDMRFSQLNVAVELELWQEAFRSIEDIHSLLTFSKRAPAAVMLGNYYRKLIKIFLVCDNYLLHAAAWNRYFTFTNVQKPATANFVILSALSIPIIDANKLSGPSIEAEDAKSKNARLALLLNLSKTPTRETLIKDAISRGVLSFCDQAIRDLYQILEVEFHPLSICKKLQPIIKRLAESNDTAQYIRPLQQVILTRLFQQLSQVYDSISLKYVMDLATFEEPYDFNPGQIEKFIMNGNKKGAFSIRLNHIENSISFSSDLFSNPIKSSDSVSLQSTPSELITSQLTRIAKSLSSVLMRFDTDFCLLRKQQAEAAYERAQAGVEQERKAVIAQRSLLELRRGQADTLATQREAELAAQRALKQKQESEAESLRVQEEINKRNAERIRREKEAIRINEAKKLAEELKAKGGLEVNAEDLEHLDADKLRAMQIEQVEKQNKSMNERLRVIGKRIDHLERAYRREAIPLWEEDAKQQAEHDREIFYEREKQRKEVQERKHEQAIKDKKAFAQFASYIHAYKQNIDDERDKAYQEAYAKAKNVIDAERERQRKEIFEQKLAEAIREAEEEAARAAEEEANRELHEQEEAQKRAIEERTRAAREAKEREQREMAEKLERQRRIQQERDEEISRKLAEKAAARRANIGASSPSPGAWRRGGASAGGVSRDSPRYSRGGYSRGSVPPRETLAPSKGAYVPPSRRNQQQQ</sequence>
<feature type="chain" id="PRO_0000123543" description="Eukaryotic translation initiation factor 3 subunit A">
    <location>
        <begin position="1"/>
        <end position="932"/>
    </location>
</feature>
<feature type="domain" description="PCI" evidence="2">
    <location>
        <begin position="309"/>
        <end position="492"/>
    </location>
</feature>
<feature type="region of interest" description="Disordered" evidence="3">
    <location>
        <begin position="793"/>
        <end position="932"/>
    </location>
</feature>
<feature type="coiled-coil region" evidence="1">
    <location>
        <begin position="537"/>
        <end position="862"/>
    </location>
</feature>
<feature type="compositionally biased region" description="Basic and acidic residues" evidence="3">
    <location>
        <begin position="793"/>
        <end position="865"/>
    </location>
</feature>
<feature type="compositionally biased region" description="Low complexity" evidence="3">
    <location>
        <begin position="877"/>
        <end position="893"/>
    </location>
</feature>
<feature type="modified residue" description="Phosphoserine" evidence="1 6">
    <location>
        <position position="374"/>
    </location>
</feature>
<feature type="modified residue" description="Phosphoserine" evidence="1 6">
    <location>
        <position position="501"/>
    </location>
</feature>
<feature type="modified residue" description="Phosphoserine" evidence="1 6">
    <location>
        <position position="874"/>
    </location>
</feature>
<feature type="modified residue" description="Phosphoserine" evidence="1 6">
    <location>
        <position position="875"/>
    </location>
</feature>
<feature type="modified residue" description="Phosphoserine" evidence="1 6">
    <location>
        <position position="877"/>
    </location>
</feature>
<feature type="sequence conflict" description="In Ref. 2; BAA13936." evidence="7" ref="2">
    <original>L</original>
    <variation>I</variation>
    <location>
        <position position="569"/>
    </location>
</feature>
<feature type="sequence conflict" description="In Ref. 2; BAA13936." evidence="7" ref="2">
    <original>NK</original>
    <variation>DE</variation>
    <location>
        <begin position="609"/>
        <end position="610"/>
    </location>
</feature>
<feature type="sequence conflict" description="In Ref. 2; BAA13936." evidence="7" ref="2">
    <original>KHEQAIKDKKAFAQFASYIHA</original>
    <variation>TSVLLPLMLRCLNDNYVKLLF</variation>
    <location>
        <begin position="726"/>
        <end position="746"/>
    </location>
</feature>
<name>EIF3A_SCHPO</name>
<protein>
    <recommendedName>
        <fullName evidence="1">Eukaryotic translation initiation factor 3 subunit A</fullName>
        <shortName evidence="1">eIF3a</shortName>
    </recommendedName>
    <alternativeName>
        <fullName>Eukaryotic translation initiation factor 3 110 kDa subunit</fullName>
        <shortName evidence="1">eIF3 p110</shortName>
    </alternativeName>
    <alternativeName>
        <fullName>Translation initiation factor eIF3, p110 subunit</fullName>
    </alternativeName>
</protein>
<reference key="1">
    <citation type="journal article" date="2002" name="Nature">
        <title>The genome sequence of Schizosaccharomyces pombe.</title>
        <authorList>
            <person name="Wood V."/>
            <person name="Gwilliam R."/>
            <person name="Rajandream M.A."/>
            <person name="Lyne M.H."/>
            <person name="Lyne R."/>
            <person name="Stewart A."/>
            <person name="Sgouros J.G."/>
            <person name="Peat N."/>
            <person name="Hayles J."/>
            <person name="Baker S.G."/>
            <person name="Basham D."/>
            <person name="Bowman S."/>
            <person name="Brooks K."/>
            <person name="Brown D."/>
            <person name="Brown S."/>
            <person name="Chillingworth T."/>
            <person name="Churcher C.M."/>
            <person name="Collins M."/>
            <person name="Connor R."/>
            <person name="Cronin A."/>
            <person name="Davis P."/>
            <person name="Feltwell T."/>
            <person name="Fraser A."/>
            <person name="Gentles S."/>
            <person name="Goble A."/>
            <person name="Hamlin N."/>
            <person name="Harris D.E."/>
            <person name="Hidalgo J."/>
            <person name="Hodgson G."/>
            <person name="Holroyd S."/>
            <person name="Hornsby T."/>
            <person name="Howarth S."/>
            <person name="Huckle E.J."/>
            <person name="Hunt S."/>
            <person name="Jagels K."/>
            <person name="James K.D."/>
            <person name="Jones L."/>
            <person name="Jones M."/>
            <person name="Leather S."/>
            <person name="McDonald S."/>
            <person name="McLean J."/>
            <person name="Mooney P."/>
            <person name="Moule S."/>
            <person name="Mungall K.L."/>
            <person name="Murphy L.D."/>
            <person name="Niblett D."/>
            <person name="Odell C."/>
            <person name="Oliver K."/>
            <person name="O'Neil S."/>
            <person name="Pearson D."/>
            <person name="Quail M.A."/>
            <person name="Rabbinowitsch E."/>
            <person name="Rutherford K.M."/>
            <person name="Rutter S."/>
            <person name="Saunders D."/>
            <person name="Seeger K."/>
            <person name="Sharp S."/>
            <person name="Skelton J."/>
            <person name="Simmonds M.N."/>
            <person name="Squares R."/>
            <person name="Squares S."/>
            <person name="Stevens K."/>
            <person name="Taylor K."/>
            <person name="Taylor R.G."/>
            <person name="Tivey A."/>
            <person name="Walsh S.V."/>
            <person name="Warren T."/>
            <person name="Whitehead S."/>
            <person name="Woodward J.R."/>
            <person name="Volckaert G."/>
            <person name="Aert R."/>
            <person name="Robben J."/>
            <person name="Grymonprez B."/>
            <person name="Weltjens I."/>
            <person name="Vanstreels E."/>
            <person name="Rieger M."/>
            <person name="Schaefer M."/>
            <person name="Mueller-Auer S."/>
            <person name="Gabel C."/>
            <person name="Fuchs M."/>
            <person name="Duesterhoeft A."/>
            <person name="Fritzc C."/>
            <person name="Holzer E."/>
            <person name="Moestl D."/>
            <person name="Hilbert H."/>
            <person name="Borzym K."/>
            <person name="Langer I."/>
            <person name="Beck A."/>
            <person name="Lehrach H."/>
            <person name="Reinhardt R."/>
            <person name="Pohl T.M."/>
            <person name="Eger P."/>
            <person name="Zimmermann W."/>
            <person name="Wedler H."/>
            <person name="Wambutt R."/>
            <person name="Purnelle B."/>
            <person name="Goffeau A."/>
            <person name="Cadieu E."/>
            <person name="Dreano S."/>
            <person name="Gloux S."/>
            <person name="Lelaure V."/>
            <person name="Mottier S."/>
            <person name="Galibert F."/>
            <person name="Aves S.J."/>
            <person name="Xiang Z."/>
            <person name="Hunt C."/>
            <person name="Moore K."/>
            <person name="Hurst S.M."/>
            <person name="Lucas M."/>
            <person name="Rochet M."/>
            <person name="Gaillardin C."/>
            <person name="Tallada V.A."/>
            <person name="Garzon A."/>
            <person name="Thode G."/>
            <person name="Daga R.R."/>
            <person name="Cruzado L."/>
            <person name="Jimenez J."/>
            <person name="Sanchez M."/>
            <person name="del Rey F."/>
            <person name="Benito J."/>
            <person name="Dominguez A."/>
            <person name="Revuelta J.L."/>
            <person name="Moreno S."/>
            <person name="Armstrong J."/>
            <person name="Forsburg S.L."/>
            <person name="Cerutti L."/>
            <person name="Lowe T."/>
            <person name="McCombie W.R."/>
            <person name="Paulsen I."/>
            <person name="Potashkin J."/>
            <person name="Shpakovski G.V."/>
            <person name="Ussery D."/>
            <person name="Barrell B.G."/>
            <person name="Nurse P."/>
        </authorList>
    </citation>
    <scope>NUCLEOTIDE SEQUENCE [LARGE SCALE GENOMIC DNA]</scope>
    <source>
        <strain>972 / ATCC 24843</strain>
    </source>
</reference>
<reference key="2">
    <citation type="journal article" date="1997" name="DNA Res.">
        <title>Identification of open reading frames in Schizosaccharomyces pombe cDNAs.</title>
        <authorList>
            <person name="Yoshioka S."/>
            <person name="Kato K."/>
            <person name="Nakai K."/>
            <person name="Okayama H."/>
            <person name="Nojima H."/>
        </authorList>
    </citation>
    <scope>NUCLEOTIDE SEQUENCE [LARGE SCALE MRNA] OF 447-746</scope>
    <source>
        <strain>PR745</strain>
    </source>
</reference>
<reference key="3">
    <citation type="journal article" date="2001" name="J. Biol. Chem.">
        <title>Fission yeast homolog of murine Int-6 protein, encoded by mouse mammary tumor virus integration site, is associated with the conserved core subunits of eukaryotic translation initiation factor 3.</title>
        <authorList>
            <person name="Akiyoshi Y."/>
            <person name="Clayton J."/>
            <person name="Phan L."/>
            <person name="Yamamoto M."/>
            <person name="Hinnebusch A.G."/>
            <person name="Watanabe Y."/>
            <person name="Asano K."/>
        </authorList>
    </citation>
    <scope>IDENTIFICATION IN THE EIF-3 COMPLEX</scope>
    <scope>IDENTIFICATION BY MASS SPECTROMETRY</scope>
</reference>
<reference key="4">
    <citation type="journal article" date="2005" name="BMC Biol.">
        <title>PCI proteins eIF3e and eIF3m define distinct translation initiation factor 3 complexes.</title>
        <authorList>
            <person name="Zhou C."/>
            <person name="Arslan F."/>
            <person name="Wee S."/>
            <person name="Krishnan S."/>
            <person name="Ivanov A.R."/>
            <person name="Oliva A."/>
            <person name="Leatherwood J."/>
            <person name="Wolf D.A."/>
        </authorList>
    </citation>
    <scope>IDENTIFICATION IN THE EIF-3 COMPLEX</scope>
    <scope>IDENTIFICATION BY MASS SPECTROMETRY</scope>
</reference>
<reference key="5">
    <citation type="journal article" date="2008" name="J. Proteome Res.">
        <title>Phosphoproteome analysis of fission yeast.</title>
        <authorList>
            <person name="Wilson-Grady J.T."/>
            <person name="Villen J."/>
            <person name="Gygi S.P."/>
        </authorList>
    </citation>
    <scope>PHOSPHORYLATION [LARGE SCALE ANALYSIS] AT SER-374; SER-501; SER-874; SER-875 AND SER-877</scope>
    <scope>IDENTIFICATION BY MASS SPECTROMETRY</scope>
</reference>
<accession>O74760</accession>
<accession>P78924</accession>
<organism>
    <name type="scientific">Schizosaccharomyces pombe (strain 972 / ATCC 24843)</name>
    <name type="common">Fission yeast</name>
    <dbReference type="NCBI Taxonomy" id="284812"/>
    <lineage>
        <taxon>Eukaryota</taxon>
        <taxon>Fungi</taxon>
        <taxon>Dikarya</taxon>
        <taxon>Ascomycota</taxon>
        <taxon>Taphrinomycotina</taxon>
        <taxon>Schizosaccharomycetes</taxon>
        <taxon>Schizosaccharomycetales</taxon>
        <taxon>Schizosaccharomycetaceae</taxon>
        <taxon>Schizosaccharomyces</taxon>
    </lineage>
</organism>
<keyword id="KW-0175">Coiled coil</keyword>
<keyword id="KW-0963">Cytoplasm</keyword>
<keyword id="KW-0396">Initiation factor</keyword>
<keyword id="KW-0597">Phosphoprotein</keyword>
<keyword id="KW-0648">Protein biosynthesis</keyword>
<keyword id="KW-1185">Reference proteome</keyword>
<keyword id="KW-0694">RNA-binding</keyword>
<proteinExistence type="evidence at protein level"/>